<organism>
    <name type="scientific">Helicobacter pylori (strain P12)</name>
    <dbReference type="NCBI Taxonomy" id="570508"/>
    <lineage>
        <taxon>Bacteria</taxon>
        <taxon>Pseudomonadati</taxon>
        <taxon>Campylobacterota</taxon>
        <taxon>Epsilonproteobacteria</taxon>
        <taxon>Campylobacterales</taxon>
        <taxon>Helicobacteraceae</taxon>
        <taxon>Helicobacter</taxon>
    </lineage>
</organism>
<dbReference type="EMBL" id="CP001217">
    <property type="protein sequence ID" value="ACJ07247.1"/>
    <property type="molecule type" value="Genomic_DNA"/>
</dbReference>
<dbReference type="SMR" id="B6JPI6"/>
<dbReference type="KEGG" id="hpp:HPP12_0087"/>
<dbReference type="HOGENOM" id="CLU_082184_2_2_7"/>
<dbReference type="Proteomes" id="UP000008198">
    <property type="component" value="Chromosome"/>
</dbReference>
<dbReference type="GO" id="GO:0022625">
    <property type="term" value="C:cytosolic large ribosomal subunit"/>
    <property type="evidence" value="ECO:0007669"/>
    <property type="project" value="TreeGrafter"/>
</dbReference>
<dbReference type="GO" id="GO:0003729">
    <property type="term" value="F:mRNA binding"/>
    <property type="evidence" value="ECO:0007669"/>
    <property type="project" value="TreeGrafter"/>
</dbReference>
<dbReference type="GO" id="GO:0003735">
    <property type="term" value="F:structural constituent of ribosome"/>
    <property type="evidence" value="ECO:0007669"/>
    <property type="project" value="InterPro"/>
</dbReference>
<dbReference type="GO" id="GO:0017148">
    <property type="term" value="P:negative regulation of translation"/>
    <property type="evidence" value="ECO:0007669"/>
    <property type="project" value="TreeGrafter"/>
</dbReference>
<dbReference type="GO" id="GO:0006412">
    <property type="term" value="P:translation"/>
    <property type="evidence" value="ECO:0007669"/>
    <property type="project" value="UniProtKB-UniRule"/>
</dbReference>
<dbReference type="CDD" id="cd00392">
    <property type="entry name" value="Ribosomal_L13"/>
    <property type="match status" value="1"/>
</dbReference>
<dbReference type="FunFam" id="3.90.1180.10:FF:000004">
    <property type="entry name" value="50S ribosomal protein L13"/>
    <property type="match status" value="1"/>
</dbReference>
<dbReference type="Gene3D" id="3.90.1180.10">
    <property type="entry name" value="Ribosomal protein L13"/>
    <property type="match status" value="1"/>
</dbReference>
<dbReference type="HAMAP" id="MF_01366">
    <property type="entry name" value="Ribosomal_uL13"/>
    <property type="match status" value="1"/>
</dbReference>
<dbReference type="InterPro" id="IPR005822">
    <property type="entry name" value="Ribosomal_uL13"/>
</dbReference>
<dbReference type="InterPro" id="IPR005823">
    <property type="entry name" value="Ribosomal_uL13_bac-type"/>
</dbReference>
<dbReference type="InterPro" id="IPR023563">
    <property type="entry name" value="Ribosomal_uL13_CS"/>
</dbReference>
<dbReference type="InterPro" id="IPR036899">
    <property type="entry name" value="Ribosomal_uL13_sf"/>
</dbReference>
<dbReference type="NCBIfam" id="TIGR01066">
    <property type="entry name" value="rplM_bact"/>
    <property type="match status" value="1"/>
</dbReference>
<dbReference type="PANTHER" id="PTHR11545:SF2">
    <property type="entry name" value="LARGE RIBOSOMAL SUBUNIT PROTEIN UL13M"/>
    <property type="match status" value="1"/>
</dbReference>
<dbReference type="PANTHER" id="PTHR11545">
    <property type="entry name" value="RIBOSOMAL PROTEIN L13"/>
    <property type="match status" value="1"/>
</dbReference>
<dbReference type="Pfam" id="PF00572">
    <property type="entry name" value="Ribosomal_L13"/>
    <property type="match status" value="1"/>
</dbReference>
<dbReference type="PIRSF" id="PIRSF002181">
    <property type="entry name" value="Ribosomal_L13"/>
    <property type="match status" value="1"/>
</dbReference>
<dbReference type="SUPFAM" id="SSF52161">
    <property type="entry name" value="Ribosomal protein L13"/>
    <property type="match status" value="1"/>
</dbReference>
<dbReference type="PROSITE" id="PS00783">
    <property type="entry name" value="RIBOSOMAL_L13"/>
    <property type="match status" value="1"/>
</dbReference>
<comment type="function">
    <text evidence="1">This protein is one of the early assembly proteins of the 50S ribosomal subunit, although it is not seen to bind rRNA by itself. It is important during the early stages of 50S assembly.</text>
</comment>
<comment type="subunit">
    <text evidence="1">Part of the 50S ribosomal subunit.</text>
</comment>
<comment type="similarity">
    <text evidence="1">Belongs to the universal ribosomal protein uL13 family.</text>
</comment>
<evidence type="ECO:0000255" key="1">
    <source>
        <dbReference type="HAMAP-Rule" id="MF_01366"/>
    </source>
</evidence>
<evidence type="ECO:0000305" key="2"/>
<name>RL13_HELP2</name>
<proteinExistence type="inferred from homology"/>
<sequence>MTKTAKVNDIVRDWVVLDAKDKVFGRLITEIAVLLRGKHRPFYTPNVDCGDFVVVINANKVKFSGMKLEDKEYFTHSGYFGSTKSKTLQEMLEKAPEKLYHLAVRGMLPKTKLGKAMIKKLKVYRDDKHPHTAQTSKKDAK</sequence>
<accession>B6JPI6</accession>
<keyword id="KW-0687">Ribonucleoprotein</keyword>
<keyword id="KW-0689">Ribosomal protein</keyword>
<gene>
    <name evidence="1" type="primary">rplM</name>
    <name type="ordered locus">HPP12_0087</name>
</gene>
<feature type="chain" id="PRO_1000144137" description="Large ribosomal subunit protein uL13">
    <location>
        <begin position="1"/>
        <end position="141"/>
    </location>
</feature>
<protein>
    <recommendedName>
        <fullName evidence="1">Large ribosomal subunit protein uL13</fullName>
    </recommendedName>
    <alternativeName>
        <fullName evidence="2">50S ribosomal protein L13</fullName>
    </alternativeName>
</protein>
<reference key="1">
    <citation type="submission" date="2008-10" db="EMBL/GenBank/DDBJ databases">
        <title>The complete genome sequence of Helicobacter pylori strain P12.</title>
        <authorList>
            <person name="Fischer W."/>
            <person name="Windhager L."/>
            <person name="Karnholz A."/>
            <person name="Zeiller M."/>
            <person name="Zimmer R."/>
            <person name="Haas R."/>
        </authorList>
    </citation>
    <scope>NUCLEOTIDE SEQUENCE [LARGE SCALE GENOMIC DNA]</scope>
    <source>
        <strain>P12</strain>
    </source>
</reference>